<name>RECA_SHEPC</name>
<accession>A4Y933</accession>
<protein>
    <recommendedName>
        <fullName evidence="1">Protein RecA</fullName>
    </recommendedName>
    <alternativeName>
        <fullName evidence="1">Recombinase A</fullName>
    </alternativeName>
</protein>
<gene>
    <name evidence="1" type="primary">recA</name>
    <name type="ordered locus">Sputcn32_2747</name>
</gene>
<organism>
    <name type="scientific">Shewanella putrefaciens (strain CN-32 / ATCC BAA-453)</name>
    <dbReference type="NCBI Taxonomy" id="319224"/>
    <lineage>
        <taxon>Bacteria</taxon>
        <taxon>Pseudomonadati</taxon>
        <taxon>Pseudomonadota</taxon>
        <taxon>Gammaproteobacteria</taxon>
        <taxon>Alteromonadales</taxon>
        <taxon>Shewanellaceae</taxon>
        <taxon>Shewanella</taxon>
    </lineage>
</organism>
<comment type="function">
    <text evidence="1">Can catalyze the hydrolysis of ATP in the presence of single-stranded DNA, the ATP-dependent uptake of single-stranded DNA by duplex DNA, and the ATP-dependent hybridization of homologous single-stranded DNAs. It interacts with LexA causing its activation and leading to its autocatalytic cleavage.</text>
</comment>
<comment type="subcellular location">
    <subcellularLocation>
        <location evidence="1">Cytoplasm</location>
    </subcellularLocation>
</comment>
<comment type="similarity">
    <text evidence="1">Belongs to the RecA family.</text>
</comment>
<proteinExistence type="inferred from homology"/>
<feature type="chain" id="PRO_1000047996" description="Protein RecA">
    <location>
        <begin position="1"/>
        <end position="357"/>
    </location>
</feature>
<feature type="region of interest" description="Disordered" evidence="2">
    <location>
        <begin position="335"/>
        <end position="357"/>
    </location>
</feature>
<feature type="binding site" evidence="1">
    <location>
        <begin position="67"/>
        <end position="74"/>
    </location>
    <ligand>
        <name>ATP</name>
        <dbReference type="ChEBI" id="CHEBI:30616"/>
    </ligand>
</feature>
<sequence length="357" mass="38047">MKVDPNKEKALAAVLSQIEKQFGKGSIMKLGEDRSMDVETISTGSLSLDVALGAGGLPMGRIVEIYGPESSGKTTLTLEVIAAAQREGKTCAFIDAEHALDPIYAKKLGVDIDNLLCSQPDTGEQALEICDALTRSGAVDVIVVDSVAALTPKAEIEGEIGDSHMGLAARMMSQAMRKLAGNLKQSNTLLIFINQIRMKIGVMFGNPETTTGGNALKFYASVRLDIRRTGAIKDGDEVVGNETRVKVVKNKVAAPFKQAEFQILYGQGINRTGELVDLGVAHKLIEKAGAWYSYKGDKIGQGRANAGKYLTENPAIAAEIDKTLRELLLSNPSALASSASDDESTEGNIDLETGEIF</sequence>
<keyword id="KW-0067">ATP-binding</keyword>
<keyword id="KW-0963">Cytoplasm</keyword>
<keyword id="KW-0227">DNA damage</keyword>
<keyword id="KW-0233">DNA recombination</keyword>
<keyword id="KW-0234">DNA repair</keyword>
<keyword id="KW-0238">DNA-binding</keyword>
<keyword id="KW-0547">Nucleotide-binding</keyword>
<keyword id="KW-0742">SOS response</keyword>
<reference key="1">
    <citation type="submission" date="2007-04" db="EMBL/GenBank/DDBJ databases">
        <title>Complete sequence of Shewanella putrefaciens CN-32.</title>
        <authorList>
            <consortium name="US DOE Joint Genome Institute"/>
            <person name="Copeland A."/>
            <person name="Lucas S."/>
            <person name="Lapidus A."/>
            <person name="Barry K."/>
            <person name="Detter J.C."/>
            <person name="Glavina del Rio T."/>
            <person name="Hammon N."/>
            <person name="Israni S."/>
            <person name="Dalin E."/>
            <person name="Tice H."/>
            <person name="Pitluck S."/>
            <person name="Chain P."/>
            <person name="Malfatti S."/>
            <person name="Shin M."/>
            <person name="Vergez L."/>
            <person name="Schmutz J."/>
            <person name="Larimer F."/>
            <person name="Land M."/>
            <person name="Hauser L."/>
            <person name="Kyrpides N."/>
            <person name="Mikhailova N."/>
            <person name="Romine M.F."/>
            <person name="Fredrickson J."/>
            <person name="Tiedje J."/>
            <person name="Richardson P."/>
        </authorList>
    </citation>
    <scope>NUCLEOTIDE SEQUENCE [LARGE SCALE GENOMIC DNA]</scope>
    <source>
        <strain>CN-32 / ATCC BAA-453</strain>
    </source>
</reference>
<evidence type="ECO:0000255" key="1">
    <source>
        <dbReference type="HAMAP-Rule" id="MF_00268"/>
    </source>
</evidence>
<evidence type="ECO:0000256" key="2">
    <source>
        <dbReference type="SAM" id="MobiDB-lite"/>
    </source>
</evidence>
<dbReference type="EMBL" id="CP000681">
    <property type="protein sequence ID" value="ABP76466.1"/>
    <property type="molecule type" value="Genomic_DNA"/>
</dbReference>
<dbReference type="SMR" id="A4Y933"/>
<dbReference type="STRING" id="319224.Sputcn32_2747"/>
<dbReference type="KEGG" id="spc:Sputcn32_2747"/>
<dbReference type="eggNOG" id="COG0468">
    <property type="taxonomic scope" value="Bacteria"/>
</dbReference>
<dbReference type="HOGENOM" id="CLU_040469_3_2_6"/>
<dbReference type="GO" id="GO:0005829">
    <property type="term" value="C:cytosol"/>
    <property type="evidence" value="ECO:0007669"/>
    <property type="project" value="TreeGrafter"/>
</dbReference>
<dbReference type="GO" id="GO:0005524">
    <property type="term" value="F:ATP binding"/>
    <property type="evidence" value="ECO:0007669"/>
    <property type="project" value="UniProtKB-UniRule"/>
</dbReference>
<dbReference type="GO" id="GO:0016887">
    <property type="term" value="F:ATP hydrolysis activity"/>
    <property type="evidence" value="ECO:0007669"/>
    <property type="project" value="InterPro"/>
</dbReference>
<dbReference type="GO" id="GO:0140664">
    <property type="term" value="F:ATP-dependent DNA damage sensor activity"/>
    <property type="evidence" value="ECO:0007669"/>
    <property type="project" value="InterPro"/>
</dbReference>
<dbReference type="GO" id="GO:0003684">
    <property type="term" value="F:damaged DNA binding"/>
    <property type="evidence" value="ECO:0007669"/>
    <property type="project" value="UniProtKB-UniRule"/>
</dbReference>
<dbReference type="GO" id="GO:0003697">
    <property type="term" value="F:single-stranded DNA binding"/>
    <property type="evidence" value="ECO:0007669"/>
    <property type="project" value="UniProtKB-UniRule"/>
</dbReference>
<dbReference type="GO" id="GO:0006310">
    <property type="term" value="P:DNA recombination"/>
    <property type="evidence" value="ECO:0007669"/>
    <property type="project" value="UniProtKB-UniRule"/>
</dbReference>
<dbReference type="GO" id="GO:0006281">
    <property type="term" value="P:DNA repair"/>
    <property type="evidence" value="ECO:0007669"/>
    <property type="project" value="UniProtKB-UniRule"/>
</dbReference>
<dbReference type="GO" id="GO:0009432">
    <property type="term" value="P:SOS response"/>
    <property type="evidence" value="ECO:0007669"/>
    <property type="project" value="UniProtKB-UniRule"/>
</dbReference>
<dbReference type="CDD" id="cd00983">
    <property type="entry name" value="RecA"/>
    <property type="match status" value="1"/>
</dbReference>
<dbReference type="FunFam" id="3.40.50.300:FF:000087">
    <property type="entry name" value="Recombinase RecA"/>
    <property type="match status" value="1"/>
</dbReference>
<dbReference type="Gene3D" id="3.40.50.300">
    <property type="entry name" value="P-loop containing nucleotide triphosphate hydrolases"/>
    <property type="match status" value="1"/>
</dbReference>
<dbReference type="HAMAP" id="MF_00268">
    <property type="entry name" value="RecA"/>
    <property type="match status" value="1"/>
</dbReference>
<dbReference type="InterPro" id="IPR003593">
    <property type="entry name" value="AAA+_ATPase"/>
</dbReference>
<dbReference type="InterPro" id="IPR013765">
    <property type="entry name" value="DNA_recomb/repair_RecA"/>
</dbReference>
<dbReference type="InterPro" id="IPR020584">
    <property type="entry name" value="DNA_recomb/repair_RecA_CS"/>
</dbReference>
<dbReference type="InterPro" id="IPR027417">
    <property type="entry name" value="P-loop_NTPase"/>
</dbReference>
<dbReference type="InterPro" id="IPR049261">
    <property type="entry name" value="RecA-like_C"/>
</dbReference>
<dbReference type="InterPro" id="IPR049428">
    <property type="entry name" value="RecA-like_N"/>
</dbReference>
<dbReference type="InterPro" id="IPR020588">
    <property type="entry name" value="RecA_ATP-bd"/>
</dbReference>
<dbReference type="InterPro" id="IPR023400">
    <property type="entry name" value="RecA_C_sf"/>
</dbReference>
<dbReference type="InterPro" id="IPR020587">
    <property type="entry name" value="RecA_monomer-monomer_interface"/>
</dbReference>
<dbReference type="NCBIfam" id="TIGR02012">
    <property type="entry name" value="tigrfam_recA"/>
    <property type="match status" value="1"/>
</dbReference>
<dbReference type="PANTHER" id="PTHR45900:SF1">
    <property type="entry name" value="MITOCHONDRIAL DNA REPAIR PROTEIN RECA HOMOLOG-RELATED"/>
    <property type="match status" value="1"/>
</dbReference>
<dbReference type="PANTHER" id="PTHR45900">
    <property type="entry name" value="RECA"/>
    <property type="match status" value="1"/>
</dbReference>
<dbReference type="Pfam" id="PF00154">
    <property type="entry name" value="RecA"/>
    <property type="match status" value="1"/>
</dbReference>
<dbReference type="Pfam" id="PF21096">
    <property type="entry name" value="RecA_C"/>
    <property type="match status" value="1"/>
</dbReference>
<dbReference type="PRINTS" id="PR00142">
    <property type="entry name" value="RECA"/>
</dbReference>
<dbReference type="SMART" id="SM00382">
    <property type="entry name" value="AAA"/>
    <property type="match status" value="1"/>
</dbReference>
<dbReference type="SUPFAM" id="SSF52540">
    <property type="entry name" value="P-loop containing nucleoside triphosphate hydrolases"/>
    <property type="match status" value="1"/>
</dbReference>
<dbReference type="SUPFAM" id="SSF54752">
    <property type="entry name" value="RecA protein, C-terminal domain"/>
    <property type="match status" value="1"/>
</dbReference>
<dbReference type="PROSITE" id="PS00321">
    <property type="entry name" value="RECA_1"/>
    <property type="match status" value="1"/>
</dbReference>
<dbReference type="PROSITE" id="PS50162">
    <property type="entry name" value="RECA_2"/>
    <property type="match status" value="1"/>
</dbReference>
<dbReference type="PROSITE" id="PS50163">
    <property type="entry name" value="RECA_3"/>
    <property type="match status" value="1"/>
</dbReference>